<proteinExistence type="evidence at transcript level"/>
<accession>Q32LB3</accession>
<reference key="1">
    <citation type="submission" date="2005-11" db="EMBL/GenBank/DDBJ databases">
        <authorList>
            <consortium name="NIH - Mammalian Gene Collection (MGC) project"/>
        </authorList>
    </citation>
    <scope>NUCLEOTIDE SEQUENCE [LARGE SCALE MRNA]</scope>
    <source>
        <strain>Crossbred X Angus</strain>
        <tissue>Liver</tissue>
    </source>
</reference>
<dbReference type="EMBL" id="BC109662">
    <property type="protein sequence ID" value="AAI09663.1"/>
    <property type="status" value="ALT_SEQ"/>
    <property type="molecule type" value="mRNA"/>
</dbReference>
<dbReference type="RefSeq" id="NP_001033265.2">
    <property type="nucleotide sequence ID" value="NM_001038176.2"/>
</dbReference>
<dbReference type="RefSeq" id="XP_005209522.1">
    <property type="nucleotide sequence ID" value="XM_005209465.3"/>
</dbReference>
<dbReference type="RefSeq" id="XP_005209523.1">
    <property type="nucleotide sequence ID" value="XM_005209466.5"/>
</dbReference>
<dbReference type="RefSeq" id="XP_005209524.1">
    <property type="nucleotide sequence ID" value="XM_005209467.3"/>
</dbReference>
<dbReference type="RefSeq" id="XP_005209525.1">
    <property type="nucleotide sequence ID" value="XM_005209468.4"/>
</dbReference>
<dbReference type="RefSeq" id="XP_024850201.1">
    <property type="nucleotide sequence ID" value="XM_024994433.2"/>
</dbReference>
<dbReference type="RefSeq" id="XP_024850202.1">
    <property type="nucleotide sequence ID" value="XM_024994434.2"/>
</dbReference>
<dbReference type="RefSeq" id="XP_059744291.1">
    <property type="nucleotide sequence ID" value="XM_059888308.1"/>
</dbReference>
<dbReference type="SMR" id="Q32LB3"/>
<dbReference type="FunCoup" id="Q32LB3">
    <property type="interactions" value="249"/>
</dbReference>
<dbReference type="STRING" id="9913.ENSBTAP00000005204"/>
<dbReference type="PaxDb" id="9913-ENSBTAP00000005204"/>
<dbReference type="Ensembl" id="ENSBTAT00000005204.5">
    <property type="protein sequence ID" value="ENSBTAP00000005204.3"/>
    <property type="gene ID" value="ENSBTAG00000003986.6"/>
</dbReference>
<dbReference type="GeneID" id="538485"/>
<dbReference type="KEGG" id="bta:538485"/>
<dbReference type="CTD" id="51523"/>
<dbReference type="VEuPathDB" id="HostDB:ENSBTAG00000003986"/>
<dbReference type="VGNC" id="VGNC:27860">
    <property type="gene designation" value="CXXC5"/>
</dbReference>
<dbReference type="eggNOG" id="ENOG502QT2M">
    <property type="taxonomic scope" value="Eukaryota"/>
</dbReference>
<dbReference type="GeneTree" id="ENSGT00940000154108"/>
<dbReference type="HOGENOM" id="CLU_074593_0_0_1"/>
<dbReference type="InParanoid" id="Q32LB3"/>
<dbReference type="OMA" id="ANGHDPP"/>
<dbReference type="OrthoDB" id="8854879at2759"/>
<dbReference type="TreeFam" id="TF326617"/>
<dbReference type="Proteomes" id="UP000009136">
    <property type="component" value="Chromosome 7"/>
</dbReference>
<dbReference type="Bgee" id="ENSBTAG00000003986">
    <property type="expression patterns" value="Expressed in cerebellum and 106 other cell types or tissues"/>
</dbReference>
<dbReference type="GO" id="GO:0005829">
    <property type="term" value="C:cytosol"/>
    <property type="evidence" value="ECO:0007669"/>
    <property type="project" value="Ensembl"/>
</dbReference>
<dbReference type="GO" id="GO:0005654">
    <property type="term" value="C:nucleoplasm"/>
    <property type="evidence" value="ECO:0007669"/>
    <property type="project" value="Ensembl"/>
</dbReference>
<dbReference type="GO" id="GO:0005634">
    <property type="term" value="C:nucleus"/>
    <property type="evidence" value="ECO:0000318"/>
    <property type="project" value="GO_Central"/>
</dbReference>
<dbReference type="GO" id="GO:0140297">
    <property type="term" value="F:DNA-binding transcription factor binding"/>
    <property type="evidence" value="ECO:0000250"/>
    <property type="project" value="UniProtKB"/>
</dbReference>
<dbReference type="GO" id="GO:0008327">
    <property type="term" value="F:methyl-CpG binding"/>
    <property type="evidence" value="ECO:0000250"/>
    <property type="project" value="UniProtKB"/>
</dbReference>
<dbReference type="GO" id="GO:0043565">
    <property type="term" value="F:sequence-specific DNA binding"/>
    <property type="evidence" value="ECO:0000250"/>
    <property type="project" value="UniProtKB"/>
</dbReference>
<dbReference type="GO" id="GO:0008270">
    <property type="term" value="F:zinc ion binding"/>
    <property type="evidence" value="ECO:0000250"/>
    <property type="project" value="UniProtKB"/>
</dbReference>
<dbReference type="GO" id="GO:0000122">
    <property type="term" value="P:negative regulation of transcription by RNA polymerase II"/>
    <property type="evidence" value="ECO:0000250"/>
    <property type="project" value="UniProtKB"/>
</dbReference>
<dbReference type="GO" id="GO:0043467">
    <property type="term" value="P:regulation of generation of precursor metabolites and energy"/>
    <property type="evidence" value="ECO:0007669"/>
    <property type="project" value="Ensembl"/>
</dbReference>
<dbReference type="InterPro" id="IPR040388">
    <property type="entry name" value="CXXC4/CXXC5"/>
</dbReference>
<dbReference type="InterPro" id="IPR002857">
    <property type="entry name" value="Znf_CXXC"/>
</dbReference>
<dbReference type="PANTHER" id="PTHR13419:SF2">
    <property type="entry name" value="CXXC-TYPE ZINC FINGER PROTEIN 5"/>
    <property type="match status" value="1"/>
</dbReference>
<dbReference type="PANTHER" id="PTHR13419">
    <property type="entry name" value="ZINC FINGER-CONTAINING"/>
    <property type="match status" value="1"/>
</dbReference>
<dbReference type="Pfam" id="PF02008">
    <property type="entry name" value="zf-CXXC"/>
    <property type="match status" value="1"/>
</dbReference>
<dbReference type="PROSITE" id="PS51058">
    <property type="entry name" value="ZF_CXXC"/>
    <property type="match status" value="1"/>
</dbReference>
<gene>
    <name type="primary">CXXC5</name>
</gene>
<keyword id="KW-0963">Cytoplasm</keyword>
<keyword id="KW-0238">DNA-binding</keyword>
<keyword id="KW-0479">Metal-binding</keyword>
<keyword id="KW-0539">Nucleus</keyword>
<keyword id="KW-1185">Reference proteome</keyword>
<keyword id="KW-0862">Zinc</keyword>
<keyword id="KW-0863">Zinc-finger</keyword>
<feature type="chain" id="PRO_0000317547" description="CXXC-type zinc finger protein 5">
    <location>
        <begin position="1"/>
        <end position="317"/>
    </location>
</feature>
<feature type="zinc finger region" description="CXXC-type" evidence="4">
    <location>
        <begin position="251"/>
        <end position="292"/>
    </location>
</feature>
<feature type="region of interest" description="Disordered" evidence="5">
    <location>
        <begin position="1"/>
        <end position="96"/>
    </location>
</feature>
<feature type="short sequence motif" description="Nuclear localization signal" evidence="3">
    <location>
        <begin position="252"/>
        <end position="257"/>
    </location>
</feature>
<feature type="compositionally biased region" description="Low complexity" evidence="5">
    <location>
        <begin position="1"/>
        <end position="49"/>
    </location>
</feature>
<feature type="compositionally biased region" description="Gly residues" evidence="5">
    <location>
        <begin position="83"/>
        <end position="94"/>
    </location>
</feature>
<feature type="binding site" evidence="4">
    <location>
        <position position="258"/>
    </location>
    <ligand>
        <name>Zn(2+)</name>
        <dbReference type="ChEBI" id="CHEBI:29105"/>
        <label>1</label>
    </ligand>
</feature>
<feature type="binding site" evidence="4">
    <location>
        <position position="261"/>
    </location>
    <ligand>
        <name>Zn(2+)</name>
        <dbReference type="ChEBI" id="CHEBI:29105"/>
        <label>1</label>
    </ligand>
</feature>
<feature type="binding site" evidence="4">
    <location>
        <position position="264"/>
    </location>
    <ligand>
        <name>Zn(2+)</name>
        <dbReference type="ChEBI" id="CHEBI:29105"/>
        <label>1</label>
    </ligand>
</feature>
<feature type="binding site" evidence="4">
    <location>
        <position position="270"/>
    </location>
    <ligand>
        <name>Zn(2+)</name>
        <dbReference type="ChEBI" id="CHEBI:29105"/>
        <label>2</label>
    </ligand>
</feature>
<feature type="binding site" evidence="4">
    <location>
        <position position="273"/>
    </location>
    <ligand>
        <name>Zn(2+)</name>
        <dbReference type="ChEBI" id="CHEBI:29105"/>
        <label>2</label>
    </ligand>
</feature>
<feature type="binding site" evidence="4">
    <location>
        <position position="276"/>
    </location>
    <ligand>
        <name>Zn(2+)</name>
        <dbReference type="ChEBI" id="CHEBI:29105"/>
        <label>2</label>
    </ligand>
</feature>
<feature type="binding site" evidence="4">
    <location>
        <position position="286"/>
    </location>
    <ligand>
        <name>Zn(2+)</name>
        <dbReference type="ChEBI" id="CHEBI:29105"/>
        <label>2</label>
    </ligand>
</feature>
<feature type="binding site" evidence="4">
    <location>
        <position position="291"/>
    </location>
    <ligand>
        <name>Zn(2+)</name>
        <dbReference type="ChEBI" id="CHEBI:29105"/>
        <label>1</label>
    </ligand>
</feature>
<name>CXXC5_BOVIN</name>
<sequence>MSSLSSGPQDTGGSSSSSSNGSSGSGPKAGVADKSAAVAAAAPASVADDAPPPERRNKSGIISEPLNKSLRRSRPLSHYSSFGGSGGSGGGSMMGGESAEKAAAAAASLLANGHDLAAAMAVDKSNSTSKHKSSAVASLLSKAERATELGAEGQLTLQQFAQSTEMLKRVVQEHLPLMSEAGAGLPDMEAVAGAEALNGQSDFPYLGAFPINPGLFIMTPAGVFLAESALHMAGLAEYPMQGELASAISSGKKKRKRCGMCAPCRRRINCEQCSSCRNRKTGHQICKFRKCEELKKKPSAALEKVMLPTGAAFRWFQ</sequence>
<protein>
    <recommendedName>
        <fullName>CXXC-type zinc finger protein 5</fullName>
    </recommendedName>
</protein>
<organism>
    <name type="scientific">Bos taurus</name>
    <name type="common">Bovine</name>
    <dbReference type="NCBI Taxonomy" id="9913"/>
    <lineage>
        <taxon>Eukaryota</taxon>
        <taxon>Metazoa</taxon>
        <taxon>Chordata</taxon>
        <taxon>Craniata</taxon>
        <taxon>Vertebrata</taxon>
        <taxon>Euteleostomi</taxon>
        <taxon>Mammalia</taxon>
        <taxon>Eutheria</taxon>
        <taxon>Laurasiatheria</taxon>
        <taxon>Artiodactyla</taxon>
        <taxon>Ruminantia</taxon>
        <taxon>Pecora</taxon>
        <taxon>Bovidae</taxon>
        <taxon>Bovinae</taxon>
        <taxon>Bos</taxon>
    </lineage>
</organism>
<comment type="function">
    <text evidence="1 2">May indirectly participate in activation of the NF-kappa-B and MAPK pathways. Acts as a mediator of BMP4-mediated modulation of canonical Wnt signaling activity in neural stem cells. Required for DNA damage-induced ATM phosphorylation, p53 activation and cell cycle arrest. Involved in myelopoiesis (By similarity). Binds to the oxygen responsive element of COX4I2 and represses its transcription under hypoxia conditions (4% oxygen), as well as normoxia conditions (20% oxygen). May repress COX4I2 transactivation induced by CHCHD2 and RBPJ (By similarity). Binds preferentially to DNA containing cytidine-phosphate-guanosine (CpG) dinucleotides over CpH (H=A, T, and C), hemimethylated-CpG and hemimethylated-hydroxymethyl-CpG (By similarity).</text>
</comment>
<comment type="subunit">
    <text evidence="1 2">Interacts with DVL1 (By similarity). Interacts with RBPJ (By similarity).</text>
</comment>
<comment type="subcellular location">
    <subcellularLocation>
        <location evidence="1">Nucleus</location>
    </subcellularLocation>
    <subcellularLocation>
        <location evidence="1">Cytoplasm</location>
    </subcellularLocation>
    <text evidence="1">Colocalizes with DVL1 in large bodies localized just outside the nuclear membrane.</text>
</comment>
<comment type="domain">
    <text evidence="2">The CXXC zinc finger mediates binding to CpG-DNA.</text>
</comment>
<comment type="sequence caution" evidence="6">
    <conflict type="erroneous termination">
        <sequence resource="EMBL-CDS" id="AAI09663"/>
    </conflict>
    <text>Truncated C-terminus.</text>
</comment>
<evidence type="ECO:0000250" key="1">
    <source>
        <dbReference type="UniProtKB" id="Q5XIQ3"/>
    </source>
</evidence>
<evidence type="ECO:0000250" key="2">
    <source>
        <dbReference type="UniProtKB" id="Q7LFL8"/>
    </source>
</evidence>
<evidence type="ECO:0000255" key="3"/>
<evidence type="ECO:0000255" key="4">
    <source>
        <dbReference type="PROSITE-ProRule" id="PRU00509"/>
    </source>
</evidence>
<evidence type="ECO:0000256" key="5">
    <source>
        <dbReference type="SAM" id="MobiDB-lite"/>
    </source>
</evidence>
<evidence type="ECO:0000305" key="6"/>